<sequence>MKFILMNQAAELPIEFLPRDGAYRKGRLLDSKNAEVENTTESDILQDARRAAEAHRRVRYKVQSIIKPGMTLLEIVKSIEDSTRILLSGERNNGIGFPAGMSMNSCAAHYSVNPGEKDIILTENDVLKIDFGTHSNGRIMDSAFTIAFKEEFEPLLMAAKEGTETGIRSLGIDARVCDIGRDINEVISSYEMEVDGKKWAIRPVSDLHGHSISQFKIHGGISIPAVNNRDPTRITGDTFYAVETFATTGEGFINDRSPCSHFMINTHKSRKLYNKDLIKVYEFVRDSFGTLPFSPRHLDYYNLVEGSALKSVNLLTMMGLFTPYPPLNDIDGSKVAQFEHTVYLSESGKEILTRGDDY</sequence>
<organism>
    <name type="scientific">Encephalitozoon hellem (strain ATCC 50504)</name>
    <name type="common">Microsporidian parasite</name>
    <dbReference type="NCBI Taxonomy" id="907965"/>
    <lineage>
        <taxon>Eukaryota</taxon>
        <taxon>Fungi</taxon>
        <taxon>Fungi incertae sedis</taxon>
        <taxon>Microsporidia</taxon>
        <taxon>Unikaryonidae</taxon>
        <taxon>Encephalitozoon</taxon>
    </lineage>
</organism>
<comment type="function">
    <text evidence="1 2">Cotranslationally removes the N-terminal methionine from nascent proteins. The N-terminal methionine is often cleaved when the second residue in the primary sequence is small and uncharged (Met-Ala-, Cys, Gly, Pro, Ser, Thr, or Val).</text>
</comment>
<comment type="catalytic activity">
    <reaction evidence="1">
        <text>Release of N-terminal amino acids, preferentially methionine, from peptides and arylamides.</text>
        <dbReference type="EC" id="3.4.11.18"/>
    </reaction>
</comment>
<comment type="cofactor">
    <cofactor evidence="1">
        <name>Co(2+)</name>
        <dbReference type="ChEBI" id="CHEBI:48828"/>
    </cofactor>
    <cofactor evidence="1">
        <name>Zn(2+)</name>
        <dbReference type="ChEBI" id="CHEBI:29105"/>
    </cofactor>
    <cofactor evidence="1">
        <name>Mn(2+)</name>
        <dbReference type="ChEBI" id="CHEBI:29035"/>
    </cofactor>
    <cofactor evidence="1">
        <name>Fe(2+)</name>
        <dbReference type="ChEBI" id="CHEBI:29033"/>
    </cofactor>
    <text evidence="1">Binds 2 divalent metal cations per subunit. Has a high-affinity and a low affinity metal-binding site. The true nature of the physiological cofactor is under debate. The enzyme is active with cobalt, zinc, manganese or divalent iron ions. Most likely, methionine aminopeptidases function as mononuclear Fe(2+)-metalloproteases under physiological conditions, and the catalytically relevant metal-binding site has been assigned to the histidine-containing high-affinity site.</text>
</comment>
<comment type="activity regulation">
    <text evidence="2">Irreversibly inhibited by the fungal metabolite fumagillin and the fumagillin analog TNP470, antiangiogenic drugs.</text>
</comment>
<comment type="subcellular location">
    <subcellularLocation>
        <location evidence="1">Cytoplasm</location>
    </subcellularLocation>
</comment>
<comment type="similarity">
    <text evidence="1">Belongs to the peptidase M24A family. Methionine aminopeptidase eukaryotic type 2 subfamily.</text>
</comment>
<dbReference type="EC" id="3.4.11.18" evidence="1"/>
<dbReference type="EMBL" id="AY224694">
    <property type="protein sequence ID" value="AAP51023.1"/>
    <property type="molecule type" value="Genomic_DNA"/>
</dbReference>
<dbReference type="EMBL" id="CP002723">
    <property type="protein sequence ID" value="AFM99168.1"/>
    <property type="molecule type" value="Genomic_DNA"/>
</dbReference>
<dbReference type="EMBL" id="AY339780">
    <property type="protein sequence ID" value="AAR04554.1"/>
    <property type="molecule type" value="Genomic_DNA"/>
</dbReference>
<dbReference type="RefSeq" id="XP_003888149.1">
    <property type="nucleotide sequence ID" value="XM_003888100.1"/>
</dbReference>
<dbReference type="SMR" id="Q6XMH6"/>
<dbReference type="GeneID" id="13466604"/>
<dbReference type="KEGG" id="ehe:EHEL_100750"/>
<dbReference type="VEuPathDB" id="MicrosporidiaDB:EHEL_100750"/>
<dbReference type="HOGENOM" id="CLU_015857_7_0_1"/>
<dbReference type="OrthoDB" id="125at6029"/>
<dbReference type="BRENDA" id="3.4.11.18">
    <property type="organism ID" value="8141"/>
</dbReference>
<dbReference type="GO" id="GO:0005737">
    <property type="term" value="C:cytoplasm"/>
    <property type="evidence" value="ECO:0007669"/>
    <property type="project" value="UniProtKB-SubCell"/>
</dbReference>
<dbReference type="GO" id="GO:0004239">
    <property type="term" value="F:initiator methionyl aminopeptidase activity"/>
    <property type="evidence" value="ECO:0007669"/>
    <property type="project" value="UniProtKB-UniRule"/>
</dbReference>
<dbReference type="GO" id="GO:0046872">
    <property type="term" value="F:metal ion binding"/>
    <property type="evidence" value="ECO:0007669"/>
    <property type="project" value="UniProtKB-UniRule"/>
</dbReference>
<dbReference type="GO" id="GO:0070006">
    <property type="term" value="F:metalloaminopeptidase activity"/>
    <property type="evidence" value="ECO:0007669"/>
    <property type="project" value="UniProtKB-UniRule"/>
</dbReference>
<dbReference type="GO" id="GO:0006508">
    <property type="term" value="P:proteolysis"/>
    <property type="evidence" value="ECO:0007669"/>
    <property type="project" value="UniProtKB-KW"/>
</dbReference>
<dbReference type="Gene3D" id="3.90.230.10">
    <property type="entry name" value="Creatinase/methionine aminopeptidase superfamily"/>
    <property type="match status" value="1"/>
</dbReference>
<dbReference type="Gene3D" id="1.10.10.10">
    <property type="entry name" value="Winged helix-like DNA-binding domain superfamily/Winged helix DNA-binding domain"/>
    <property type="match status" value="1"/>
</dbReference>
<dbReference type="HAMAP" id="MF_03175">
    <property type="entry name" value="MetAP_2_euk"/>
    <property type="match status" value="1"/>
</dbReference>
<dbReference type="InterPro" id="IPR036005">
    <property type="entry name" value="Creatinase/aminopeptidase-like"/>
</dbReference>
<dbReference type="InterPro" id="IPR050247">
    <property type="entry name" value="Met_Aminopeptidase_Type2"/>
</dbReference>
<dbReference type="InterPro" id="IPR000994">
    <property type="entry name" value="Pept_M24"/>
</dbReference>
<dbReference type="InterPro" id="IPR002468">
    <property type="entry name" value="Pept_M24A_MAP2"/>
</dbReference>
<dbReference type="InterPro" id="IPR018349">
    <property type="entry name" value="Pept_M24A_MAP2_BS"/>
</dbReference>
<dbReference type="InterPro" id="IPR036388">
    <property type="entry name" value="WH-like_DNA-bd_sf"/>
</dbReference>
<dbReference type="InterPro" id="IPR036390">
    <property type="entry name" value="WH_DNA-bd_sf"/>
</dbReference>
<dbReference type="NCBIfam" id="TIGR00501">
    <property type="entry name" value="met_pdase_II"/>
    <property type="match status" value="1"/>
</dbReference>
<dbReference type="PANTHER" id="PTHR45777">
    <property type="entry name" value="METHIONINE AMINOPEPTIDASE 2"/>
    <property type="match status" value="1"/>
</dbReference>
<dbReference type="PANTHER" id="PTHR45777:SF2">
    <property type="entry name" value="METHIONINE AMINOPEPTIDASE 2"/>
    <property type="match status" value="1"/>
</dbReference>
<dbReference type="Pfam" id="PF00557">
    <property type="entry name" value="Peptidase_M24"/>
    <property type="match status" value="1"/>
</dbReference>
<dbReference type="SUPFAM" id="SSF55920">
    <property type="entry name" value="Creatinase/aminopeptidase"/>
    <property type="match status" value="1"/>
</dbReference>
<dbReference type="SUPFAM" id="SSF46785">
    <property type="entry name" value="Winged helix' DNA-binding domain"/>
    <property type="match status" value="1"/>
</dbReference>
<dbReference type="PROSITE" id="PS01202">
    <property type="entry name" value="MAP_2"/>
    <property type="match status" value="1"/>
</dbReference>
<keyword id="KW-0031">Aminopeptidase</keyword>
<keyword id="KW-0963">Cytoplasm</keyword>
<keyword id="KW-0378">Hydrolase</keyword>
<keyword id="KW-0479">Metal-binding</keyword>
<keyword id="KW-0645">Protease</keyword>
<protein>
    <recommendedName>
        <fullName evidence="1">Methionine aminopeptidase 2</fullName>
        <shortName evidence="1">MAP 2</shortName>
        <shortName evidence="1">MetAP 2</shortName>
        <ecNumber evidence="1">3.4.11.18</ecNumber>
    </recommendedName>
    <alternativeName>
        <fullName evidence="1">Peptidase M</fullName>
    </alternativeName>
</protein>
<reference key="1">
    <citation type="journal article" date="2005" name="Folia Parasitol.">
        <title>Investigations into microsporidian methionine aminopeptidase type 2: a therapeutic target for microsporidiosis.</title>
        <authorList>
            <person name="Zhang H."/>
            <person name="Huang H."/>
            <person name="Cali A."/>
            <person name="Takvorian P.M."/>
            <person name="Feng X."/>
            <person name="Zhou G."/>
            <person name="Weiss L.M."/>
        </authorList>
    </citation>
    <scope>NUCLEOTIDE SEQUENCE [GENOMIC DNA]</scope>
</reference>
<reference key="2">
    <citation type="journal article" date="2012" name="Proc. Natl. Acad. Sci. U.S.A.">
        <title>Gain and loss of multiple functionally related, horizontally transferred genes in the reduced genomes of two microsporidian parasites.</title>
        <authorList>
            <person name="Pombert J.-F."/>
            <person name="Selman M."/>
            <person name="Burki F."/>
            <person name="Bardell F.T."/>
            <person name="Farinelli L."/>
            <person name="Solter L.F."/>
            <person name="Whitman D.W."/>
            <person name="Weiss L.M."/>
            <person name="Corradi N."/>
            <person name="Keeling P.J."/>
        </authorList>
    </citation>
    <scope>NUCLEOTIDE SEQUENCE [LARGE SCALE GENOMIC DNA]</scope>
    <source>
        <strain>ATCC 50504</strain>
    </source>
</reference>
<reference key="3">
    <citation type="journal article" date="2005" name="Mol. Biochem. Parasitol.">
        <title>Phylogenetic relationships of methionine aminopeptidase 2 among Encephalitozoon species and genotypes of microsporidia.</title>
        <authorList>
            <person name="Pandrea I."/>
            <person name="Mittleider D."/>
            <person name="Brindley P.J."/>
            <person name="Didier E.S."/>
            <person name="Robertson D.L."/>
        </authorList>
    </citation>
    <scope>NUCLEOTIDE SEQUENCE [GENOMIC DNA] OF 20-343</scope>
    <source>
        <strain>ATCC 50504</strain>
    </source>
</reference>
<reference key="4">
    <citation type="journal article" date="2001" name="J. Eukaryot. Microbiol.">
        <title>Microsporidian methionine aminopeptidase type 2.</title>
        <authorList>
            <person name="Weiss L.M."/>
            <person name="Costa S.F."/>
            <person name="Zhang H."/>
        </authorList>
    </citation>
    <scope>FUNCTION</scope>
    <scope>ACTIVITY REGULATION</scope>
</reference>
<feature type="chain" id="PRO_0000148986" description="Methionine aminopeptidase 2">
    <location>
        <begin position="1"/>
        <end position="358"/>
    </location>
</feature>
<feature type="binding site" evidence="1">
    <location>
        <position position="109"/>
    </location>
    <ligand>
        <name>substrate</name>
    </ligand>
</feature>
<feature type="binding site" evidence="1">
    <location>
        <position position="130"/>
    </location>
    <ligand>
        <name>a divalent metal cation</name>
        <dbReference type="ChEBI" id="CHEBI:60240"/>
        <label>1</label>
    </ligand>
</feature>
<feature type="binding site" evidence="1">
    <location>
        <position position="141"/>
    </location>
    <ligand>
        <name>a divalent metal cation</name>
        <dbReference type="ChEBI" id="CHEBI:60240"/>
        <label>1</label>
    </ligand>
</feature>
<feature type="binding site" evidence="1">
    <location>
        <position position="141"/>
    </location>
    <ligand>
        <name>a divalent metal cation</name>
        <dbReference type="ChEBI" id="CHEBI:60240"/>
        <label>2</label>
        <note>catalytic</note>
    </ligand>
</feature>
<feature type="binding site" evidence="1">
    <location>
        <position position="210"/>
    </location>
    <ligand>
        <name>a divalent metal cation</name>
        <dbReference type="ChEBI" id="CHEBI:60240"/>
        <label>2</label>
        <note>catalytic</note>
    </ligand>
</feature>
<feature type="binding site" evidence="1">
    <location>
        <position position="218"/>
    </location>
    <ligand>
        <name>substrate</name>
    </ligand>
</feature>
<feature type="binding site" evidence="1">
    <location>
        <position position="243"/>
    </location>
    <ligand>
        <name>a divalent metal cation</name>
        <dbReference type="ChEBI" id="CHEBI:60240"/>
        <label>2</label>
        <note>catalytic</note>
    </ligand>
</feature>
<feature type="binding site" evidence="1">
    <location>
        <position position="339"/>
    </location>
    <ligand>
        <name>a divalent metal cation</name>
        <dbReference type="ChEBI" id="CHEBI:60240"/>
        <label>1</label>
    </ligand>
</feature>
<feature type="binding site" evidence="1">
    <location>
        <position position="339"/>
    </location>
    <ligand>
        <name>a divalent metal cation</name>
        <dbReference type="ChEBI" id="CHEBI:60240"/>
        <label>2</label>
        <note>catalytic</note>
    </ligand>
</feature>
<accession>Q6XMH6</accession>
<accession>I6UP09</accession>
<accession>Q6VH16</accession>
<name>MAP2_ENCHA</name>
<evidence type="ECO:0000255" key="1">
    <source>
        <dbReference type="HAMAP-Rule" id="MF_03175"/>
    </source>
</evidence>
<evidence type="ECO:0000269" key="2">
    <source>
    </source>
</evidence>
<gene>
    <name evidence="1" type="primary">MAP2</name>
    <name type="ordered locus">EHEL_100750</name>
</gene>
<proteinExistence type="inferred from homology"/>